<protein>
    <recommendedName>
        <fullName evidence="1">L-seryl-tRNA(Sec) selenium transferase</fullName>
        <ecNumber evidence="1">2.9.1.1</ecNumber>
    </recommendedName>
    <alternativeName>
        <fullName evidence="1">Selenocysteine synthase</fullName>
        <shortName evidence="1">Sec synthase</shortName>
    </alternativeName>
    <alternativeName>
        <fullName evidence="1">Selenocysteinyl-tRNA(Sec) synthase</fullName>
    </alternativeName>
</protein>
<organism>
    <name type="scientific">Escherichia coli (strain K12 / MC4100 / BW2952)</name>
    <dbReference type="NCBI Taxonomy" id="595496"/>
    <lineage>
        <taxon>Bacteria</taxon>
        <taxon>Pseudomonadati</taxon>
        <taxon>Pseudomonadota</taxon>
        <taxon>Gammaproteobacteria</taxon>
        <taxon>Enterobacterales</taxon>
        <taxon>Enterobacteriaceae</taxon>
        <taxon>Escherichia</taxon>
    </lineage>
</organism>
<gene>
    <name evidence="1" type="primary">selA</name>
    <name type="ordered locus">BWG_3281</name>
</gene>
<accession>C4ZXI2</accession>
<name>SELA_ECOBW</name>
<reference key="1">
    <citation type="journal article" date="2009" name="J. Bacteriol.">
        <title>Genomic sequencing reveals regulatory mutations and recombinational events in the widely used MC4100 lineage of Escherichia coli K-12.</title>
        <authorList>
            <person name="Ferenci T."/>
            <person name="Zhou Z."/>
            <person name="Betteridge T."/>
            <person name="Ren Y."/>
            <person name="Liu Y."/>
            <person name="Feng L."/>
            <person name="Reeves P.R."/>
            <person name="Wang L."/>
        </authorList>
    </citation>
    <scope>NUCLEOTIDE SEQUENCE [LARGE SCALE GENOMIC DNA]</scope>
    <source>
        <strain>K12 / MC4100 / BW2952</strain>
    </source>
</reference>
<keyword id="KW-0963">Cytoplasm</keyword>
<keyword id="KW-0648">Protein biosynthesis</keyword>
<keyword id="KW-0663">Pyridoxal phosphate</keyword>
<keyword id="KW-0711">Selenium</keyword>
<keyword id="KW-0808">Transferase</keyword>
<comment type="function">
    <text evidence="1">Converts seryl-tRNA(Sec) to selenocysteinyl-tRNA(Sec) required for selenoprotein biosynthesis.</text>
</comment>
<comment type="catalytic activity">
    <reaction evidence="1">
        <text>L-seryl-tRNA(Sec) + selenophosphate + H(+) = L-selenocysteinyl-tRNA(Sec) + phosphate</text>
        <dbReference type="Rhea" id="RHEA:22728"/>
        <dbReference type="Rhea" id="RHEA-COMP:9742"/>
        <dbReference type="Rhea" id="RHEA-COMP:9743"/>
        <dbReference type="ChEBI" id="CHEBI:15378"/>
        <dbReference type="ChEBI" id="CHEBI:16144"/>
        <dbReference type="ChEBI" id="CHEBI:43474"/>
        <dbReference type="ChEBI" id="CHEBI:78533"/>
        <dbReference type="ChEBI" id="CHEBI:78573"/>
        <dbReference type="EC" id="2.9.1.1"/>
    </reaction>
</comment>
<comment type="cofactor">
    <cofactor evidence="1">
        <name>pyridoxal 5'-phosphate</name>
        <dbReference type="ChEBI" id="CHEBI:597326"/>
    </cofactor>
</comment>
<comment type="pathway">
    <text evidence="1">Aminoacyl-tRNA biosynthesis; selenocysteinyl-tRNA(Sec) biosynthesis; selenocysteinyl-tRNA(Sec) from L-seryl-tRNA(Sec) (bacterial route): step 1/1.</text>
</comment>
<comment type="subunit">
    <text evidence="1">Homodecamer; pentamer of dimers. Binds only one seryl-tRNA(Sec) per dimer.</text>
</comment>
<comment type="subcellular location">
    <subcellularLocation>
        <location evidence="1">Cytoplasm</location>
    </subcellularLocation>
</comment>
<comment type="similarity">
    <text evidence="1">Belongs to the SelA family.</text>
</comment>
<evidence type="ECO:0000255" key="1">
    <source>
        <dbReference type="HAMAP-Rule" id="MF_00423"/>
    </source>
</evidence>
<dbReference type="EC" id="2.9.1.1" evidence="1"/>
<dbReference type="EMBL" id="CP001396">
    <property type="protein sequence ID" value="ACR65515.1"/>
    <property type="molecule type" value="Genomic_DNA"/>
</dbReference>
<dbReference type="RefSeq" id="WP_000206223.1">
    <property type="nucleotide sequence ID" value="NC_012759.1"/>
</dbReference>
<dbReference type="SMR" id="C4ZXI2"/>
<dbReference type="KEGG" id="ebw:BWG_3281"/>
<dbReference type="HOGENOM" id="CLU_038142_1_0_6"/>
<dbReference type="UniPathway" id="UPA00906">
    <property type="reaction ID" value="UER00896"/>
</dbReference>
<dbReference type="GO" id="GO:0005737">
    <property type="term" value="C:cytoplasm"/>
    <property type="evidence" value="ECO:0007669"/>
    <property type="project" value="UniProtKB-SubCell"/>
</dbReference>
<dbReference type="GO" id="GO:0004125">
    <property type="term" value="F:L-seryl-tRNA(Sec) selenium transferase activity"/>
    <property type="evidence" value="ECO:0007669"/>
    <property type="project" value="UniProtKB-UniRule"/>
</dbReference>
<dbReference type="GO" id="GO:0001717">
    <property type="term" value="P:conversion of seryl-tRNAsec to selenocys-tRNAsec"/>
    <property type="evidence" value="ECO:0007669"/>
    <property type="project" value="UniProtKB-UniRule"/>
</dbReference>
<dbReference type="GO" id="GO:0001514">
    <property type="term" value="P:selenocysteine incorporation"/>
    <property type="evidence" value="ECO:0007669"/>
    <property type="project" value="UniProtKB-UniRule"/>
</dbReference>
<dbReference type="FunFam" id="3.40.640.10:FF:000028">
    <property type="entry name" value="L-seryl-tRNA(Sec) selenium transferase"/>
    <property type="match status" value="1"/>
</dbReference>
<dbReference type="FunFam" id="3.90.1150.180:FF:000001">
    <property type="entry name" value="L-seryl-tRNA(Sec) selenium transferase"/>
    <property type="match status" value="1"/>
</dbReference>
<dbReference type="Gene3D" id="3.90.1150.180">
    <property type="match status" value="1"/>
</dbReference>
<dbReference type="Gene3D" id="3.40.640.10">
    <property type="entry name" value="Type I PLP-dependent aspartate aminotransferase-like (Major domain)"/>
    <property type="match status" value="1"/>
</dbReference>
<dbReference type="HAMAP" id="MF_00423">
    <property type="entry name" value="SelA"/>
    <property type="match status" value="1"/>
</dbReference>
<dbReference type="InterPro" id="IPR015424">
    <property type="entry name" value="PyrdxlP-dep_Trfase"/>
</dbReference>
<dbReference type="InterPro" id="IPR015421">
    <property type="entry name" value="PyrdxlP-dep_Trfase_major"/>
</dbReference>
<dbReference type="InterPro" id="IPR018319">
    <property type="entry name" value="SelA-like"/>
</dbReference>
<dbReference type="InterPro" id="IPR004534">
    <property type="entry name" value="SelA_trans"/>
</dbReference>
<dbReference type="InterPro" id="IPR025862">
    <property type="entry name" value="SelA_trans_N_dom"/>
</dbReference>
<dbReference type="NCBIfam" id="TIGR00474">
    <property type="entry name" value="selA"/>
    <property type="match status" value="1"/>
</dbReference>
<dbReference type="PANTHER" id="PTHR32328">
    <property type="entry name" value="L-SERYL-TRNA(SEC) SELENIUM TRANSFERASE"/>
    <property type="match status" value="1"/>
</dbReference>
<dbReference type="PANTHER" id="PTHR32328:SF0">
    <property type="entry name" value="L-SERYL-TRNA(SEC) SELENIUM TRANSFERASE"/>
    <property type="match status" value="1"/>
</dbReference>
<dbReference type="Pfam" id="PF12390">
    <property type="entry name" value="Se-cys_synth_N"/>
    <property type="match status" value="1"/>
</dbReference>
<dbReference type="Pfam" id="PF03841">
    <property type="entry name" value="SelA"/>
    <property type="match status" value="1"/>
</dbReference>
<dbReference type="SUPFAM" id="SSF53383">
    <property type="entry name" value="PLP-dependent transferases"/>
    <property type="match status" value="1"/>
</dbReference>
<proteinExistence type="inferred from homology"/>
<feature type="chain" id="PRO_1000206058" description="L-seryl-tRNA(Sec) selenium transferase">
    <location>
        <begin position="1"/>
        <end position="463"/>
    </location>
</feature>
<feature type="modified residue" description="N6-(pyridoxal phosphate)lysine" evidence="1">
    <location>
        <position position="295"/>
    </location>
</feature>
<sequence length="463" mass="50667">MTTETRFLYSQLPAIDRLLRDSSFLSLRDTYGHTRVVELLRQMLDEAREVIRGSQTLPAWCENWAQEVDARLTKEAQSALRPVINLTGTVLHTNLGRALQAEAAVEAVAQAMRSPVTLEYDLDDAGRGHRDRALAQLLCRITGAEDACIVNNNAAAVLLMLAATASGKEVVVSRGELVEIGGAFRIPDVMRQAGCTLHEVGTTNRTHANDYRQAVNENTALLMKVHTSNYSIQGFTKAIDEAELVALGKELDVPVVTDLGSGSLVDLSQYGLPKEPMPQELIAAGVSLVSFSGDKLLGGPQAGIIVGKKEMIARLQSHPLKRALRADKMTLAALEATLRLYLHPEALSEKLPTLRLLTRSAEVIQIQAQRLQAPLAAHYGAEFAVQVMPCLSQIGSGSLPVDRLPSAALTFTPHDGRGSHLESLAARWRELPVPVIGRIYDGRLWLDLRCLEDEQRFLEMLLK</sequence>